<proteinExistence type="inferred from homology"/>
<protein>
    <recommendedName>
        <fullName evidence="1">tRNA modification GTPase MnmE</fullName>
        <ecNumber evidence="1">3.6.-.-</ecNumber>
    </recommendedName>
</protein>
<gene>
    <name evidence="1" type="primary">mnmE</name>
    <name evidence="1" type="synonym">trmE</name>
    <name type="ordered locus">RPA0295</name>
</gene>
<organism>
    <name type="scientific">Rhodopseudomonas palustris (strain ATCC BAA-98 / CGA009)</name>
    <dbReference type="NCBI Taxonomy" id="258594"/>
    <lineage>
        <taxon>Bacteria</taxon>
        <taxon>Pseudomonadati</taxon>
        <taxon>Pseudomonadota</taxon>
        <taxon>Alphaproteobacteria</taxon>
        <taxon>Hyphomicrobiales</taxon>
        <taxon>Nitrobacteraceae</taxon>
        <taxon>Rhodopseudomonas</taxon>
    </lineage>
</organism>
<name>MNME_RHOPA</name>
<keyword id="KW-0963">Cytoplasm</keyword>
<keyword id="KW-0342">GTP-binding</keyword>
<keyword id="KW-0378">Hydrolase</keyword>
<keyword id="KW-0460">Magnesium</keyword>
<keyword id="KW-0479">Metal-binding</keyword>
<keyword id="KW-0547">Nucleotide-binding</keyword>
<keyword id="KW-0630">Potassium</keyword>
<keyword id="KW-0819">tRNA processing</keyword>
<sequence>MHPSDQTIFALATGPLPSAIAIVRVSGSRAGEVLTALTGSLPPPRRAVRCDLRSRDGDLIDDGVALWFPTPASATGEDVAELHIHGSRAVAAALIKTLSAFEGVRPAEPGEFTRRGFENGKLDLTEAEGLDDLIHADTDAQRRQALRQLGGVLGDRARRWRDQIIEALALVEAGIDFSDEGDVADELMGPARAKIAELSAEIAEVLAEQGRGEKLRDGMVVAIAGPPNVGKSTLINRLARREVAIVSPHAGTTRDVIEIQLDLDGYPVTVIDTAGLRDSDDPVEQEGVRRARSRAAAADLVLWLSTATDASDPDVKGPEVWRVRNKIDLATGEVAESGPSQPVFRISAATGEGFADLLRELTRFAAQYFGSAEAGLITRDRHRRLLADAAASLTRSLVPGLAEEIVAEELRASAHSLGRLLGRVDVEDVLGEIFGRFCIGK</sequence>
<reference key="1">
    <citation type="journal article" date="2004" name="Nat. Biotechnol.">
        <title>Complete genome sequence of the metabolically versatile photosynthetic bacterium Rhodopseudomonas palustris.</title>
        <authorList>
            <person name="Larimer F.W."/>
            <person name="Chain P."/>
            <person name="Hauser L."/>
            <person name="Lamerdin J.E."/>
            <person name="Malfatti S."/>
            <person name="Do L."/>
            <person name="Land M.L."/>
            <person name="Pelletier D.A."/>
            <person name="Beatty J.T."/>
            <person name="Lang A.S."/>
            <person name="Tabita F.R."/>
            <person name="Gibson J.L."/>
            <person name="Hanson T.E."/>
            <person name="Bobst C."/>
            <person name="Torres y Torres J.L."/>
            <person name="Peres C."/>
            <person name="Harrison F.H."/>
            <person name="Gibson J."/>
            <person name="Harwood C.S."/>
        </authorList>
    </citation>
    <scope>NUCLEOTIDE SEQUENCE [LARGE SCALE GENOMIC DNA]</scope>
    <source>
        <strain>ATCC BAA-98 / CGA009</strain>
    </source>
</reference>
<evidence type="ECO:0000255" key="1">
    <source>
        <dbReference type="HAMAP-Rule" id="MF_00379"/>
    </source>
</evidence>
<accession>Q6ND14</accession>
<comment type="function">
    <text evidence="1">Exhibits a very high intrinsic GTPase hydrolysis rate. Involved in the addition of a carboxymethylaminomethyl (cmnm) group at the wobble position (U34) of certain tRNAs, forming tRNA-cmnm(5)s(2)U34.</text>
</comment>
<comment type="cofactor">
    <cofactor evidence="1">
        <name>K(+)</name>
        <dbReference type="ChEBI" id="CHEBI:29103"/>
    </cofactor>
    <text evidence="1">Binds 1 potassium ion per subunit.</text>
</comment>
<comment type="subunit">
    <text evidence="1">Homodimer. Heterotetramer of two MnmE and two MnmG subunits.</text>
</comment>
<comment type="subcellular location">
    <subcellularLocation>
        <location evidence="1">Cytoplasm</location>
    </subcellularLocation>
</comment>
<comment type="similarity">
    <text evidence="1">Belongs to the TRAFAC class TrmE-Era-EngA-EngB-Septin-like GTPase superfamily. TrmE GTPase family.</text>
</comment>
<feature type="chain" id="PRO_0000345890" description="tRNA modification GTPase MnmE">
    <location>
        <begin position="1"/>
        <end position="441"/>
    </location>
</feature>
<feature type="domain" description="TrmE-type G">
    <location>
        <begin position="218"/>
        <end position="366"/>
    </location>
</feature>
<feature type="binding site" evidence="1">
    <location>
        <position position="24"/>
    </location>
    <ligand>
        <name>(6S)-5-formyl-5,6,7,8-tetrahydrofolate</name>
        <dbReference type="ChEBI" id="CHEBI:57457"/>
    </ligand>
</feature>
<feature type="binding site" evidence="1">
    <location>
        <position position="81"/>
    </location>
    <ligand>
        <name>(6S)-5-formyl-5,6,7,8-tetrahydrofolate</name>
        <dbReference type="ChEBI" id="CHEBI:57457"/>
    </ligand>
</feature>
<feature type="binding site" evidence="1">
    <location>
        <position position="121"/>
    </location>
    <ligand>
        <name>(6S)-5-formyl-5,6,7,8-tetrahydrofolate</name>
        <dbReference type="ChEBI" id="CHEBI:57457"/>
    </ligand>
</feature>
<feature type="binding site" evidence="1">
    <location>
        <begin position="228"/>
        <end position="233"/>
    </location>
    <ligand>
        <name>GTP</name>
        <dbReference type="ChEBI" id="CHEBI:37565"/>
    </ligand>
</feature>
<feature type="binding site" evidence="1">
    <location>
        <position position="232"/>
    </location>
    <ligand>
        <name>Mg(2+)</name>
        <dbReference type="ChEBI" id="CHEBI:18420"/>
    </ligand>
</feature>
<feature type="binding site" evidence="1">
    <location>
        <begin position="247"/>
        <end position="253"/>
    </location>
    <ligand>
        <name>GTP</name>
        <dbReference type="ChEBI" id="CHEBI:37565"/>
    </ligand>
</feature>
<feature type="binding site" evidence="1">
    <location>
        <position position="253"/>
    </location>
    <ligand>
        <name>Mg(2+)</name>
        <dbReference type="ChEBI" id="CHEBI:18420"/>
    </ligand>
</feature>
<feature type="binding site" evidence="1">
    <location>
        <begin position="272"/>
        <end position="275"/>
    </location>
    <ligand>
        <name>GTP</name>
        <dbReference type="ChEBI" id="CHEBI:37565"/>
    </ligand>
</feature>
<feature type="binding site" evidence="1">
    <location>
        <position position="441"/>
    </location>
    <ligand>
        <name>(6S)-5-formyl-5,6,7,8-tetrahydrofolate</name>
        <dbReference type="ChEBI" id="CHEBI:57457"/>
    </ligand>
</feature>
<dbReference type="EC" id="3.6.-.-" evidence="1"/>
<dbReference type="EMBL" id="BX572593">
    <property type="protein sequence ID" value="CAE25739.1"/>
    <property type="molecule type" value="Genomic_DNA"/>
</dbReference>
<dbReference type="RefSeq" id="WP_011155863.1">
    <property type="nucleotide sequence ID" value="NZ_CP116810.1"/>
</dbReference>
<dbReference type="SMR" id="Q6ND14"/>
<dbReference type="STRING" id="258594.RPA0295"/>
<dbReference type="GeneID" id="66891305"/>
<dbReference type="eggNOG" id="COG0486">
    <property type="taxonomic scope" value="Bacteria"/>
</dbReference>
<dbReference type="HOGENOM" id="CLU_019624_3_1_5"/>
<dbReference type="PhylomeDB" id="Q6ND14"/>
<dbReference type="GO" id="GO:0005737">
    <property type="term" value="C:cytoplasm"/>
    <property type="evidence" value="ECO:0007669"/>
    <property type="project" value="UniProtKB-SubCell"/>
</dbReference>
<dbReference type="GO" id="GO:0016887">
    <property type="term" value="F:ATP hydrolysis activity"/>
    <property type="evidence" value="ECO:0007669"/>
    <property type="project" value="InterPro"/>
</dbReference>
<dbReference type="GO" id="GO:0005525">
    <property type="term" value="F:GTP binding"/>
    <property type="evidence" value="ECO:0007669"/>
    <property type="project" value="UniProtKB-UniRule"/>
</dbReference>
<dbReference type="GO" id="GO:0003924">
    <property type="term" value="F:GTPase activity"/>
    <property type="evidence" value="ECO:0007669"/>
    <property type="project" value="UniProtKB-UniRule"/>
</dbReference>
<dbReference type="GO" id="GO:0046872">
    <property type="term" value="F:metal ion binding"/>
    <property type="evidence" value="ECO:0007669"/>
    <property type="project" value="UniProtKB-KW"/>
</dbReference>
<dbReference type="GO" id="GO:0030488">
    <property type="term" value="P:tRNA methylation"/>
    <property type="evidence" value="ECO:0007669"/>
    <property type="project" value="TreeGrafter"/>
</dbReference>
<dbReference type="GO" id="GO:0002098">
    <property type="term" value="P:tRNA wobble uridine modification"/>
    <property type="evidence" value="ECO:0007669"/>
    <property type="project" value="TreeGrafter"/>
</dbReference>
<dbReference type="CDD" id="cd04164">
    <property type="entry name" value="trmE"/>
    <property type="match status" value="1"/>
</dbReference>
<dbReference type="CDD" id="cd14858">
    <property type="entry name" value="TrmE_N"/>
    <property type="match status" value="1"/>
</dbReference>
<dbReference type="FunFam" id="3.30.1360.120:FF:000007">
    <property type="entry name" value="tRNA modification GTPase GTPBP3, mitochondrial"/>
    <property type="match status" value="1"/>
</dbReference>
<dbReference type="Gene3D" id="3.40.50.300">
    <property type="entry name" value="P-loop containing nucleotide triphosphate hydrolases"/>
    <property type="match status" value="1"/>
</dbReference>
<dbReference type="Gene3D" id="3.30.1360.120">
    <property type="entry name" value="Probable tRNA modification gtpase trme, domain 1"/>
    <property type="match status" value="1"/>
</dbReference>
<dbReference type="Gene3D" id="1.20.120.430">
    <property type="entry name" value="tRNA modification GTPase MnmE domain 2"/>
    <property type="match status" value="1"/>
</dbReference>
<dbReference type="HAMAP" id="MF_00379">
    <property type="entry name" value="GTPase_MnmE"/>
    <property type="match status" value="1"/>
</dbReference>
<dbReference type="InterPro" id="IPR003593">
    <property type="entry name" value="AAA+_ATPase"/>
</dbReference>
<dbReference type="InterPro" id="IPR031168">
    <property type="entry name" value="G_TrmE"/>
</dbReference>
<dbReference type="InterPro" id="IPR006073">
    <property type="entry name" value="GTP-bd"/>
</dbReference>
<dbReference type="InterPro" id="IPR018948">
    <property type="entry name" value="GTP-bd_TrmE_N"/>
</dbReference>
<dbReference type="InterPro" id="IPR004520">
    <property type="entry name" value="GTPase_MnmE"/>
</dbReference>
<dbReference type="InterPro" id="IPR027368">
    <property type="entry name" value="MnmE_dom2"/>
</dbReference>
<dbReference type="InterPro" id="IPR025867">
    <property type="entry name" value="MnmE_helical"/>
</dbReference>
<dbReference type="InterPro" id="IPR027417">
    <property type="entry name" value="P-loop_NTPase"/>
</dbReference>
<dbReference type="InterPro" id="IPR005225">
    <property type="entry name" value="Small_GTP-bd"/>
</dbReference>
<dbReference type="InterPro" id="IPR027266">
    <property type="entry name" value="TrmE/GcvT_dom1"/>
</dbReference>
<dbReference type="NCBIfam" id="TIGR00450">
    <property type="entry name" value="mnmE_trmE_thdF"/>
    <property type="match status" value="1"/>
</dbReference>
<dbReference type="NCBIfam" id="NF003661">
    <property type="entry name" value="PRK05291.1-3"/>
    <property type="match status" value="1"/>
</dbReference>
<dbReference type="NCBIfam" id="TIGR00231">
    <property type="entry name" value="small_GTP"/>
    <property type="match status" value="1"/>
</dbReference>
<dbReference type="PANTHER" id="PTHR42714">
    <property type="entry name" value="TRNA MODIFICATION GTPASE GTPBP3"/>
    <property type="match status" value="1"/>
</dbReference>
<dbReference type="PANTHER" id="PTHR42714:SF2">
    <property type="entry name" value="TRNA MODIFICATION GTPASE GTPBP3, MITOCHONDRIAL"/>
    <property type="match status" value="1"/>
</dbReference>
<dbReference type="Pfam" id="PF01926">
    <property type="entry name" value="MMR_HSR1"/>
    <property type="match status" value="1"/>
</dbReference>
<dbReference type="Pfam" id="PF12631">
    <property type="entry name" value="MnmE_helical"/>
    <property type="match status" value="1"/>
</dbReference>
<dbReference type="Pfam" id="PF10396">
    <property type="entry name" value="TrmE_N"/>
    <property type="match status" value="1"/>
</dbReference>
<dbReference type="SMART" id="SM00382">
    <property type="entry name" value="AAA"/>
    <property type="match status" value="1"/>
</dbReference>
<dbReference type="SUPFAM" id="SSF52540">
    <property type="entry name" value="P-loop containing nucleoside triphosphate hydrolases"/>
    <property type="match status" value="1"/>
</dbReference>
<dbReference type="SUPFAM" id="SSF116878">
    <property type="entry name" value="TrmE connector domain"/>
    <property type="match status" value="1"/>
</dbReference>
<dbReference type="PROSITE" id="PS51709">
    <property type="entry name" value="G_TRME"/>
    <property type="match status" value="1"/>
</dbReference>